<gene>
    <name evidence="1" type="primary">purH</name>
    <name type="ordered locus">BURPS1710b_3403</name>
</gene>
<name>PUR9_BURP1</name>
<accession>Q3JNS8</accession>
<organism>
    <name type="scientific">Burkholderia pseudomallei (strain 1710b)</name>
    <dbReference type="NCBI Taxonomy" id="320372"/>
    <lineage>
        <taxon>Bacteria</taxon>
        <taxon>Pseudomonadati</taxon>
        <taxon>Pseudomonadota</taxon>
        <taxon>Betaproteobacteria</taxon>
        <taxon>Burkholderiales</taxon>
        <taxon>Burkholderiaceae</taxon>
        <taxon>Burkholderia</taxon>
        <taxon>pseudomallei group</taxon>
    </lineage>
</organism>
<dbReference type="EC" id="2.1.2.3" evidence="1"/>
<dbReference type="EC" id="3.5.4.10" evidence="1"/>
<dbReference type="EMBL" id="CP000124">
    <property type="protein sequence ID" value="ABA50888.1"/>
    <property type="molecule type" value="Genomic_DNA"/>
</dbReference>
<dbReference type="RefSeq" id="WP_004527723.1">
    <property type="nucleotide sequence ID" value="NC_007434.1"/>
</dbReference>
<dbReference type="SMR" id="Q3JNS8"/>
<dbReference type="EnsemblBacteria" id="ABA50888">
    <property type="protein sequence ID" value="ABA50888"/>
    <property type="gene ID" value="BURPS1710b_3403"/>
</dbReference>
<dbReference type="GeneID" id="93061491"/>
<dbReference type="KEGG" id="bpm:BURPS1710b_3403"/>
<dbReference type="HOGENOM" id="CLU_016316_5_2_4"/>
<dbReference type="UniPathway" id="UPA00074">
    <property type="reaction ID" value="UER00133"/>
</dbReference>
<dbReference type="UniPathway" id="UPA00074">
    <property type="reaction ID" value="UER00135"/>
</dbReference>
<dbReference type="Proteomes" id="UP000002700">
    <property type="component" value="Chromosome I"/>
</dbReference>
<dbReference type="GO" id="GO:0005829">
    <property type="term" value="C:cytosol"/>
    <property type="evidence" value="ECO:0007669"/>
    <property type="project" value="TreeGrafter"/>
</dbReference>
<dbReference type="GO" id="GO:0003937">
    <property type="term" value="F:IMP cyclohydrolase activity"/>
    <property type="evidence" value="ECO:0007669"/>
    <property type="project" value="UniProtKB-UniRule"/>
</dbReference>
<dbReference type="GO" id="GO:0004643">
    <property type="term" value="F:phosphoribosylaminoimidazolecarboxamide formyltransferase activity"/>
    <property type="evidence" value="ECO:0007669"/>
    <property type="project" value="UniProtKB-UniRule"/>
</dbReference>
<dbReference type="GO" id="GO:0006189">
    <property type="term" value="P:'de novo' IMP biosynthetic process"/>
    <property type="evidence" value="ECO:0007669"/>
    <property type="project" value="UniProtKB-UniRule"/>
</dbReference>
<dbReference type="CDD" id="cd01421">
    <property type="entry name" value="IMPCH"/>
    <property type="match status" value="1"/>
</dbReference>
<dbReference type="FunFam" id="3.40.140.20:FF:000001">
    <property type="entry name" value="Bifunctional purine biosynthesis protein PurH"/>
    <property type="match status" value="1"/>
</dbReference>
<dbReference type="FunFam" id="3.40.140.20:FF:000002">
    <property type="entry name" value="Bifunctional purine biosynthesis protein PurH"/>
    <property type="match status" value="1"/>
</dbReference>
<dbReference type="FunFam" id="3.40.50.1380:FF:000001">
    <property type="entry name" value="Bifunctional purine biosynthesis protein PurH"/>
    <property type="match status" value="1"/>
</dbReference>
<dbReference type="Gene3D" id="3.40.140.20">
    <property type="match status" value="2"/>
</dbReference>
<dbReference type="Gene3D" id="3.40.50.1380">
    <property type="entry name" value="Methylglyoxal synthase-like domain"/>
    <property type="match status" value="1"/>
</dbReference>
<dbReference type="HAMAP" id="MF_00139">
    <property type="entry name" value="PurH"/>
    <property type="match status" value="1"/>
</dbReference>
<dbReference type="InterPro" id="IPR024051">
    <property type="entry name" value="AICAR_Tfase_dup_dom_sf"/>
</dbReference>
<dbReference type="InterPro" id="IPR016193">
    <property type="entry name" value="Cytidine_deaminase-like"/>
</dbReference>
<dbReference type="InterPro" id="IPR011607">
    <property type="entry name" value="MGS-like_dom"/>
</dbReference>
<dbReference type="InterPro" id="IPR036914">
    <property type="entry name" value="MGS-like_dom_sf"/>
</dbReference>
<dbReference type="InterPro" id="IPR002695">
    <property type="entry name" value="PurH-like"/>
</dbReference>
<dbReference type="NCBIfam" id="NF002049">
    <property type="entry name" value="PRK00881.1"/>
    <property type="match status" value="1"/>
</dbReference>
<dbReference type="NCBIfam" id="TIGR00355">
    <property type="entry name" value="purH"/>
    <property type="match status" value="1"/>
</dbReference>
<dbReference type="PANTHER" id="PTHR11692:SF0">
    <property type="entry name" value="BIFUNCTIONAL PURINE BIOSYNTHESIS PROTEIN ATIC"/>
    <property type="match status" value="1"/>
</dbReference>
<dbReference type="PANTHER" id="PTHR11692">
    <property type="entry name" value="BIFUNCTIONAL PURINE BIOSYNTHESIS PROTEIN PURH"/>
    <property type="match status" value="1"/>
</dbReference>
<dbReference type="Pfam" id="PF01808">
    <property type="entry name" value="AICARFT_IMPCHas"/>
    <property type="match status" value="1"/>
</dbReference>
<dbReference type="Pfam" id="PF02142">
    <property type="entry name" value="MGS"/>
    <property type="match status" value="1"/>
</dbReference>
<dbReference type="PIRSF" id="PIRSF000414">
    <property type="entry name" value="AICARFT_IMPCHas"/>
    <property type="match status" value="1"/>
</dbReference>
<dbReference type="SMART" id="SM00798">
    <property type="entry name" value="AICARFT_IMPCHas"/>
    <property type="match status" value="1"/>
</dbReference>
<dbReference type="SMART" id="SM00851">
    <property type="entry name" value="MGS"/>
    <property type="match status" value="1"/>
</dbReference>
<dbReference type="SUPFAM" id="SSF53927">
    <property type="entry name" value="Cytidine deaminase-like"/>
    <property type="match status" value="1"/>
</dbReference>
<dbReference type="SUPFAM" id="SSF52335">
    <property type="entry name" value="Methylglyoxal synthase-like"/>
    <property type="match status" value="1"/>
</dbReference>
<dbReference type="PROSITE" id="PS51855">
    <property type="entry name" value="MGS"/>
    <property type="match status" value="1"/>
</dbReference>
<feature type="chain" id="PRO_1000018859" description="Bifunctional purine biosynthesis protein PurH">
    <location>
        <begin position="1"/>
        <end position="521"/>
    </location>
</feature>
<feature type="domain" description="MGS-like" evidence="2">
    <location>
        <begin position="1"/>
        <end position="145"/>
    </location>
</feature>
<reference key="1">
    <citation type="journal article" date="2010" name="Genome Biol. Evol.">
        <title>Continuing evolution of Burkholderia mallei through genome reduction and large-scale rearrangements.</title>
        <authorList>
            <person name="Losada L."/>
            <person name="Ronning C.M."/>
            <person name="DeShazer D."/>
            <person name="Woods D."/>
            <person name="Fedorova N."/>
            <person name="Kim H.S."/>
            <person name="Shabalina S.A."/>
            <person name="Pearson T.R."/>
            <person name="Brinkac L."/>
            <person name="Tan P."/>
            <person name="Nandi T."/>
            <person name="Crabtree J."/>
            <person name="Badger J."/>
            <person name="Beckstrom-Sternberg S."/>
            <person name="Saqib M."/>
            <person name="Schutzer S.E."/>
            <person name="Keim P."/>
            <person name="Nierman W.C."/>
        </authorList>
    </citation>
    <scope>NUCLEOTIDE SEQUENCE [LARGE SCALE GENOMIC DNA]</scope>
    <source>
        <strain>1710b</strain>
    </source>
</reference>
<keyword id="KW-0378">Hydrolase</keyword>
<keyword id="KW-0511">Multifunctional enzyme</keyword>
<keyword id="KW-0658">Purine biosynthesis</keyword>
<keyword id="KW-0808">Transferase</keyword>
<comment type="catalytic activity">
    <reaction evidence="1">
        <text>(6R)-10-formyltetrahydrofolate + 5-amino-1-(5-phospho-beta-D-ribosyl)imidazole-4-carboxamide = 5-formamido-1-(5-phospho-D-ribosyl)imidazole-4-carboxamide + (6S)-5,6,7,8-tetrahydrofolate</text>
        <dbReference type="Rhea" id="RHEA:22192"/>
        <dbReference type="ChEBI" id="CHEBI:57453"/>
        <dbReference type="ChEBI" id="CHEBI:58467"/>
        <dbReference type="ChEBI" id="CHEBI:58475"/>
        <dbReference type="ChEBI" id="CHEBI:195366"/>
        <dbReference type="EC" id="2.1.2.3"/>
    </reaction>
</comment>
<comment type="catalytic activity">
    <reaction evidence="1">
        <text>IMP + H2O = 5-formamido-1-(5-phospho-D-ribosyl)imidazole-4-carboxamide</text>
        <dbReference type="Rhea" id="RHEA:18445"/>
        <dbReference type="ChEBI" id="CHEBI:15377"/>
        <dbReference type="ChEBI" id="CHEBI:58053"/>
        <dbReference type="ChEBI" id="CHEBI:58467"/>
        <dbReference type="EC" id="3.5.4.10"/>
    </reaction>
</comment>
<comment type="pathway">
    <text evidence="1">Purine metabolism; IMP biosynthesis via de novo pathway; 5-formamido-1-(5-phospho-D-ribosyl)imidazole-4-carboxamide from 5-amino-1-(5-phospho-D-ribosyl)imidazole-4-carboxamide (10-formyl THF route): step 1/1.</text>
</comment>
<comment type="pathway">
    <text evidence="1">Purine metabolism; IMP biosynthesis via de novo pathway; IMP from 5-formamido-1-(5-phospho-D-ribosyl)imidazole-4-carboxamide: step 1/1.</text>
</comment>
<comment type="domain">
    <text evidence="1">The IMP cyclohydrolase activity resides in the N-terminal region.</text>
</comment>
<comment type="similarity">
    <text evidence="1">Belongs to the PurH family.</text>
</comment>
<proteinExistence type="inferred from homology"/>
<evidence type="ECO:0000255" key="1">
    <source>
        <dbReference type="HAMAP-Rule" id="MF_00139"/>
    </source>
</evidence>
<evidence type="ECO:0000255" key="2">
    <source>
        <dbReference type="PROSITE-ProRule" id="PRU01202"/>
    </source>
</evidence>
<protein>
    <recommendedName>
        <fullName evidence="1">Bifunctional purine biosynthesis protein PurH</fullName>
    </recommendedName>
    <domain>
        <recommendedName>
            <fullName evidence="1">Phosphoribosylaminoimidazolecarboxamide formyltransferase</fullName>
            <ecNumber evidence="1">2.1.2.3</ecNumber>
        </recommendedName>
        <alternativeName>
            <fullName evidence="1">AICAR transformylase</fullName>
        </alternativeName>
    </domain>
    <domain>
        <recommendedName>
            <fullName evidence="1">IMP cyclohydrolase</fullName>
            <ecNumber evidence="1">3.5.4.10</ecNumber>
        </recommendedName>
        <alternativeName>
            <fullName evidence="1">ATIC</fullName>
        </alternativeName>
        <alternativeName>
            <fullName evidence="1">IMP synthase</fullName>
        </alternativeName>
        <alternativeName>
            <fullName evidence="1">Inosinicase</fullName>
        </alternativeName>
    </domain>
</protein>
<sequence>MIKQALISVSDKTGIVDFAKALSALGVKLLSTGGTAKLLADAGLPVTEVADYTGFPEMLDGRVKTLHPKVHGGILARRDLPEHMQALEAHGIPTIDLLVVNLYPFVQTIAKDDCTLADAIENIDIGGPTMLRSAAKNHRDVTVVVDPADYAVVLDEMKANGNTLGYKTNFRLATKVFAHTAQYDGAITNYLTSLGDDLQHGSRSAYPATLNLAFDKVQDLRYGENPHQSAAFYRDVATPAGALANYRQLQGKELSYNNIADSDAAWECVKTFDAPACVIIKHANPCGVAVGADAGEAYAKAFQTDPTSAFGGIIAFNREVDEAAAQAVAKQFVEVLIAPSFSDAAKQVFVAKQNVRLLEIALGEGHNAFDLKRVGGGLLVQSLDSKNVQPRELRVVTKRHPTPKEMDDLLFAWRVAKYVKSNAIVFCGNGMTLGVGAGQMSRVDSARIASIKAQNAGLTLAGSAVASDAFFPFRDGLDVVVAAGATCVIQPGGSVRDDEVIAAADEHNIAMVVTGVRHFRH</sequence>